<comment type="function">
    <text evidence="1">Catalyzes the sequential condensation of isopentenyl diphosphate (IPP) with (2E,6E)-farnesyl diphosphate (E,E-FPP) to yield (2Z,6Z,10Z,14Z,18Z,22Z,26Z,30Z,34E,38E)-undecaprenyl diphosphate (di-trans,octa-cis-UPP). UPP is the precursor of glycosyl carrier lipid in the biosynthesis of bacterial cell wall polysaccharide components such as peptidoglycan and lipopolysaccharide.</text>
</comment>
<comment type="catalytic activity">
    <reaction evidence="1">
        <text>8 isopentenyl diphosphate + (2E,6E)-farnesyl diphosphate = di-trans,octa-cis-undecaprenyl diphosphate + 8 diphosphate</text>
        <dbReference type="Rhea" id="RHEA:27551"/>
        <dbReference type="ChEBI" id="CHEBI:33019"/>
        <dbReference type="ChEBI" id="CHEBI:58405"/>
        <dbReference type="ChEBI" id="CHEBI:128769"/>
        <dbReference type="ChEBI" id="CHEBI:175763"/>
        <dbReference type="EC" id="2.5.1.31"/>
    </reaction>
</comment>
<comment type="cofactor">
    <cofactor evidence="1">
        <name>Mg(2+)</name>
        <dbReference type="ChEBI" id="CHEBI:18420"/>
    </cofactor>
    <text evidence="1">Binds 2 magnesium ions per subunit.</text>
</comment>
<comment type="subunit">
    <text evidence="1">Homodimer.</text>
</comment>
<comment type="similarity">
    <text evidence="1">Belongs to the UPP synthase family.</text>
</comment>
<gene>
    <name evidence="1" type="primary">uppS</name>
    <name type="ordered locus">PM1989</name>
</gene>
<dbReference type="EC" id="2.5.1.31" evidence="1"/>
<dbReference type="EMBL" id="AE004439">
    <property type="protein sequence ID" value="AAK04073.1"/>
    <property type="molecule type" value="Genomic_DNA"/>
</dbReference>
<dbReference type="RefSeq" id="WP_005725086.1">
    <property type="nucleotide sequence ID" value="NC_002663.1"/>
</dbReference>
<dbReference type="SMR" id="Q9CJL4"/>
<dbReference type="STRING" id="272843.PM1989"/>
<dbReference type="EnsemblBacteria" id="AAK04073">
    <property type="protein sequence ID" value="AAK04073"/>
    <property type="gene ID" value="PM1989"/>
</dbReference>
<dbReference type="KEGG" id="pmu:PM1989"/>
<dbReference type="HOGENOM" id="CLU_038505_1_1_6"/>
<dbReference type="OrthoDB" id="4191603at2"/>
<dbReference type="Proteomes" id="UP000000809">
    <property type="component" value="Chromosome"/>
</dbReference>
<dbReference type="GO" id="GO:0005829">
    <property type="term" value="C:cytosol"/>
    <property type="evidence" value="ECO:0007669"/>
    <property type="project" value="TreeGrafter"/>
</dbReference>
<dbReference type="GO" id="GO:0008834">
    <property type="term" value="F:ditrans,polycis-undecaprenyl-diphosphate synthase [(2E,6E)-farnesyl-diphosphate specific] activity"/>
    <property type="evidence" value="ECO:0007669"/>
    <property type="project" value="UniProtKB-UniRule"/>
</dbReference>
<dbReference type="GO" id="GO:0000287">
    <property type="term" value="F:magnesium ion binding"/>
    <property type="evidence" value="ECO:0007669"/>
    <property type="project" value="UniProtKB-UniRule"/>
</dbReference>
<dbReference type="GO" id="GO:0071555">
    <property type="term" value="P:cell wall organization"/>
    <property type="evidence" value="ECO:0007669"/>
    <property type="project" value="UniProtKB-KW"/>
</dbReference>
<dbReference type="GO" id="GO:0009252">
    <property type="term" value="P:peptidoglycan biosynthetic process"/>
    <property type="evidence" value="ECO:0007669"/>
    <property type="project" value="UniProtKB-UniRule"/>
</dbReference>
<dbReference type="GO" id="GO:0016094">
    <property type="term" value="P:polyprenol biosynthetic process"/>
    <property type="evidence" value="ECO:0007669"/>
    <property type="project" value="TreeGrafter"/>
</dbReference>
<dbReference type="GO" id="GO:0008360">
    <property type="term" value="P:regulation of cell shape"/>
    <property type="evidence" value="ECO:0007669"/>
    <property type="project" value="UniProtKB-KW"/>
</dbReference>
<dbReference type="CDD" id="cd00475">
    <property type="entry name" value="Cis_IPPS"/>
    <property type="match status" value="1"/>
</dbReference>
<dbReference type="FunFam" id="3.40.1180.10:FF:000001">
    <property type="entry name" value="(2E,6E)-farnesyl-diphosphate-specific ditrans,polycis-undecaprenyl-diphosphate synthase"/>
    <property type="match status" value="1"/>
</dbReference>
<dbReference type="Gene3D" id="3.40.1180.10">
    <property type="entry name" value="Decaprenyl diphosphate synthase-like"/>
    <property type="match status" value="1"/>
</dbReference>
<dbReference type="HAMAP" id="MF_01139">
    <property type="entry name" value="ISPT"/>
    <property type="match status" value="1"/>
</dbReference>
<dbReference type="InterPro" id="IPR001441">
    <property type="entry name" value="UPP_synth-like"/>
</dbReference>
<dbReference type="InterPro" id="IPR018520">
    <property type="entry name" value="UPP_synth-like_CS"/>
</dbReference>
<dbReference type="InterPro" id="IPR036424">
    <property type="entry name" value="UPP_synth-like_sf"/>
</dbReference>
<dbReference type="NCBIfam" id="NF011405">
    <property type="entry name" value="PRK14830.1"/>
    <property type="match status" value="1"/>
</dbReference>
<dbReference type="NCBIfam" id="TIGR00055">
    <property type="entry name" value="uppS"/>
    <property type="match status" value="1"/>
</dbReference>
<dbReference type="PANTHER" id="PTHR10291:SF0">
    <property type="entry name" value="DEHYDRODOLICHYL DIPHOSPHATE SYNTHASE 2"/>
    <property type="match status" value="1"/>
</dbReference>
<dbReference type="PANTHER" id="PTHR10291">
    <property type="entry name" value="DEHYDRODOLICHYL DIPHOSPHATE SYNTHASE FAMILY MEMBER"/>
    <property type="match status" value="1"/>
</dbReference>
<dbReference type="Pfam" id="PF01255">
    <property type="entry name" value="Prenyltransf"/>
    <property type="match status" value="1"/>
</dbReference>
<dbReference type="SUPFAM" id="SSF64005">
    <property type="entry name" value="Undecaprenyl diphosphate synthase"/>
    <property type="match status" value="1"/>
</dbReference>
<dbReference type="PROSITE" id="PS01066">
    <property type="entry name" value="UPP_SYNTHASE"/>
    <property type="match status" value="1"/>
</dbReference>
<accession>Q9CJL4</accession>
<sequence>MVELDPNNIPQHVAIIMDGNGRWAQQKGKMRIFGHKNGVKAVREAVSYARKVGIKVLTLYAFSSENWNRPKKEVNALMALFMQALDLEVKKLHKNNIKLNILGDVTGFSASLQNKIHQAEKLTENNTALTLNIAANYGGCWDIVQATKSLAQQVKEGKLAVDEINAQVLQQALVTKEQPQVDLLIRTSGEQRISNFLLWQIAYAELYFSDVLWPDFNEKEFNEAIIAYQQRHRRFGGAEE</sequence>
<feature type="chain" id="PRO_0000123647" description="Ditrans,polycis-undecaprenyl-diphosphate synthase ((2E,6E)-farnesyl-diphosphate specific)">
    <location>
        <begin position="1"/>
        <end position="240"/>
    </location>
</feature>
<feature type="active site" evidence="1">
    <location>
        <position position="18"/>
    </location>
</feature>
<feature type="active site" description="Proton acceptor" evidence="1">
    <location>
        <position position="66"/>
    </location>
</feature>
<feature type="binding site" evidence="1">
    <location>
        <position position="18"/>
    </location>
    <ligand>
        <name>Mg(2+)</name>
        <dbReference type="ChEBI" id="CHEBI:18420"/>
    </ligand>
</feature>
<feature type="binding site" evidence="1">
    <location>
        <begin position="19"/>
        <end position="22"/>
    </location>
    <ligand>
        <name>substrate</name>
    </ligand>
</feature>
<feature type="binding site" evidence="1">
    <location>
        <position position="23"/>
    </location>
    <ligand>
        <name>substrate</name>
    </ligand>
</feature>
<feature type="binding site" evidence="1">
    <location>
        <position position="31"/>
    </location>
    <ligand>
        <name>substrate</name>
    </ligand>
</feature>
<feature type="binding site" evidence="1">
    <location>
        <position position="35"/>
    </location>
    <ligand>
        <name>substrate</name>
    </ligand>
</feature>
<feature type="binding site" evidence="1">
    <location>
        <begin position="63"/>
        <end position="65"/>
    </location>
    <ligand>
        <name>substrate</name>
    </ligand>
</feature>
<feature type="binding site" evidence="1">
    <location>
        <position position="67"/>
    </location>
    <ligand>
        <name>substrate</name>
    </ligand>
</feature>
<feature type="binding site" evidence="1">
    <location>
        <position position="69"/>
    </location>
    <ligand>
        <name>substrate</name>
    </ligand>
</feature>
<feature type="binding site" evidence="1">
    <location>
        <position position="186"/>
    </location>
    <ligand>
        <name>substrate</name>
    </ligand>
</feature>
<feature type="binding site" evidence="1">
    <location>
        <begin position="192"/>
        <end position="194"/>
    </location>
    <ligand>
        <name>substrate</name>
    </ligand>
</feature>
<feature type="binding site" evidence="1">
    <location>
        <position position="205"/>
    </location>
    <ligand>
        <name>Mg(2+)</name>
        <dbReference type="ChEBI" id="CHEBI:18420"/>
    </ligand>
</feature>
<keyword id="KW-0133">Cell shape</keyword>
<keyword id="KW-0961">Cell wall biogenesis/degradation</keyword>
<keyword id="KW-0460">Magnesium</keyword>
<keyword id="KW-0479">Metal-binding</keyword>
<keyword id="KW-0573">Peptidoglycan synthesis</keyword>
<keyword id="KW-1185">Reference proteome</keyword>
<keyword id="KW-0808">Transferase</keyword>
<protein>
    <recommendedName>
        <fullName evidence="1">Ditrans,polycis-undecaprenyl-diphosphate synthase ((2E,6E)-farnesyl-diphosphate specific)</fullName>
        <ecNumber evidence="1">2.5.1.31</ecNumber>
    </recommendedName>
    <alternativeName>
        <fullName evidence="1">Ditrans,polycis-undecaprenylcistransferase</fullName>
    </alternativeName>
    <alternativeName>
        <fullName evidence="1">Undecaprenyl diphosphate synthase</fullName>
        <shortName evidence="1">UDS</shortName>
    </alternativeName>
    <alternativeName>
        <fullName evidence="1">Undecaprenyl pyrophosphate synthase</fullName>
        <shortName evidence="1">UPP synthase</shortName>
    </alternativeName>
</protein>
<evidence type="ECO:0000255" key="1">
    <source>
        <dbReference type="HAMAP-Rule" id="MF_01139"/>
    </source>
</evidence>
<proteinExistence type="inferred from homology"/>
<name>UPPS_PASMU</name>
<reference key="1">
    <citation type="journal article" date="2001" name="Proc. Natl. Acad. Sci. U.S.A.">
        <title>Complete genomic sequence of Pasteurella multocida Pm70.</title>
        <authorList>
            <person name="May B.J."/>
            <person name="Zhang Q."/>
            <person name="Li L.L."/>
            <person name="Paustian M.L."/>
            <person name="Whittam T.S."/>
            <person name="Kapur V."/>
        </authorList>
    </citation>
    <scope>NUCLEOTIDE SEQUENCE [LARGE SCALE GENOMIC DNA]</scope>
    <source>
        <strain>Pm70</strain>
    </source>
</reference>
<organism>
    <name type="scientific">Pasteurella multocida (strain Pm70)</name>
    <dbReference type="NCBI Taxonomy" id="272843"/>
    <lineage>
        <taxon>Bacteria</taxon>
        <taxon>Pseudomonadati</taxon>
        <taxon>Pseudomonadota</taxon>
        <taxon>Gammaproteobacteria</taxon>
        <taxon>Pasteurellales</taxon>
        <taxon>Pasteurellaceae</taxon>
        <taxon>Pasteurella</taxon>
    </lineage>
</organism>